<accession>A8Z4F5</accession>
<dbReference type="EMBL" id="CP000730">
    <property type="protein sequence ID" value="ABX29624.1"/>
    <property type="molecule type" value="Genomic_DNA"/>
</dbReference>
<dbReference type="RefSeq" id="WP_000426912.1">
    <property type="nucleotide sequence ID" value="NC_010079.1"/>
</dbReference>
<dbReference type="SMR" id="A8Z4F5"/>
<dbReference type="KEGG" id="sax:USA300HOU_1617"/>
<dbReference type="HOGENOM" id="CLU_162466_0_0_9"/>
<dbReference type="BioCyc" id="SAUR451516-HMP:GTV5-1636-MONOMER"/>
<dbReference type="HAMAP" id="MF_01507">
    <property type="entry name" value="UPF0297"/>
    <property type="match status" value="1"/>
</dbReference>
<dbReference type="InterPro" id="IPR009309">
    <property type="entry name" value="IreB"/>
</dbReference>
<dbReference type="NCBIfam" id="NF003997">
    <property type="entry name" value="PRK05473.1"/>
    <property type="match status" value="1"/>
</dbReference>
<dbReference type="PANTHER" id="PTHR40067">
    <property type="entry name" value="UPF0297 PROTEIN YRZL"/>
    <property type="match status" value="1"/>
</dbReference>
<dbReference type="PANTHER" id="PTHR40067:SF1">
    <property type="entry name" value="UPF0297 PROTEIN YRZL"/>
    <property type="match status" value="1"/>
</dbReference>
<dbReference type="Pfam" id="PF06135">
    <property type="entry name" value="IreB"/>
    <property type="match status" value="1"/>
</dbReference>
<dbReference type="PIRSF" id="PIRSF037258">
    <property type="entry name" value="DUF965_bac"/>
    <property type="match status" value="1"/>
</dbReference>
<name>Y1617_STAAT</name>
<evidence type="ECO:0000255" key="1">
    <source>
        <dbReference type="HAMAP-Rule" id="MF_01507"/>
    </source>
</evidence>
<gene>
    <name type="ordered locus">USA300HOU_1617</name>
</gene>
<organism>
    <name type="scientific">Staphylococcus aureus (strain USA300 / TCH1516)</name>
    <dbReference type="NCBI Taxonomy" id="451516"/>
    <lineage>
        <taxon>Bacteria</taxon>
        <taxon>Bacillati</taxon>
        <taxon>Bacillota</taxon>
        <taxon>Bacilli</taxon>
        <taxon>Bacillales</taxon>
        <taxon>Staphylococcaceae</taxon>
        <taxon>Staphylococcus</taxon>
    </lineage>
</organism>
<comment type="similarity">
    <text evidence="1">Belongs to the UPF0297 family.</text>
</comment>
<protein>
    <recommendedName>
        <fullName evidence="1">UPF0297 protein USA300HOU_1617</fullName>
    </recommendedName>
</protein>
<sequence>MENFDKTMKFDYEELPTQDVRDVLNNVYRTLDERGYNAVNQIVGYLLSGDPAYIPRQNEARNQIRHIDRDVIMEELVSYYLKEQNK</sequence>
<feature type="chain" id="PRO_1000087522" description="UPF0297 protein USA300HOU_1617">
    <location>
        <begin position="1"/>
        <end position="86"/>
    </location>
</feature>
<reference key="1">
    <citation type="journal article" date="2007" name="BMC Microbiol.">
        <title>Subtle genetic changes enhance virulence of methicillin resistant and sensitive Staphylococcus aureus.</title>
        <authorList>
            <person name="Highlander S.K."/>
            <person name="Hulten K.G."/>
            <person name="Qin X."/>
            <person name="Jiang H."/>
            <person name="Yerrapragada S."/>
            <person name="Mason E.O. Jr."/>
            <person name="Shang Y."/>
            <person name="Williams T.M."/>
            <person name="Fortunov R.M."/>
            <person name="Liu Y."/>
            <person name="Igboeli O."/>
            <person name="Petrosino J."/>
            <person name="Tirumalai M."/>
            <person name="Uzman A."/>
            <person name="Fox G.E."/>
            <person name="Cardenas A.M."/>
            <person name="Muzny D.M."/>
            <person name="Hemphill L."/>
            <person name="Ding Y."/>
            <person name="Dugan S."/>
            <person name="Blyth P.R."/>
            <person name="Buhay C.J."/>
            <person name="Dinh H.H."/>
            <person name="Hawes A.C."/>
            <person name="Holder M."/>
            <person name="Kovar C.L."/>
            <person name="Lee S.L."/>
            <person name="Liu W."/>
            <person name="Nazareth L.V."/>
            <person name="Wang Q."/>
            <person name="Zhou J."/>
            <person name="Kaplan S.L."/>
            <person name="Weinstock G.M."/>
        </authorList>
    </citation>
    <scope>NUCLEOTIDE SEQUENCE [LARGE SCALE GENOMIC DNA]</scope>
    <source>
        <strain>USA300 / TCH1516</strain>
    </source>
</reference>
<proteinExistence type="inferred from homology"/>